<proteinExistence type="inferred from homology"/>
<comment type="function">
    <text evidence="1">Catalyzes the ATP-dependent amination of UTP to CTP with either L-glutamine or ammonia as the source of nitrogen. Regulates intracellular CTP levels through interactions with the four ribonucleotide triphosphates.</text>
</comment>
<comment type="catalytic activity">
    <reaction evidence="1">
        <text>UTP + L-glutamine + ATP + H2O = CTP + L-glutamate + ADP + phosphate + 2 H(+)</text>
        <dbReference type="Rhea" id="RHEA:26426"/>
        <dbReference type="ChEBI" id="CHEBI:15377"/>
        <dbReference type="ChEBI" id="CHEBI:15378"/>
        <dbReference type="ChEBI" id="CHEBI:29985"/>
        <dbReference type="ChEBI" id="CHEBI:30616"/>
        <dbReference type="ChEBI" id="CHEBI:37563"/>
        <dbReference type="ChEBI" id="CHEBI:43474"/>
        <dbReference type="ChEBI" id="CHEBI:46398"/>
        <dbReference type="ChEBI" id="CHEBI:58359"/>
        <dbReference type="ChEBI" id="CHEBI:456216"/>
        <dbReference type="EC" id="6.3.4.2"/>
    </reaction>
</comment>
<comment type="catalytic activity">
    <reaction evidence="1">
        <text>L-glutamine + H2O = L-glutamate + NH4(+)</text>
        <dbReference type="Rhea" id="RHEA:15889"/>
        <dbReference type="ChEBI" id="CHEBI:15377"/>
        <dbReference type="ChEBI" id="CHEBI:28938"/>
        <dbReference type="ChEBI" id="CHEBI:29985"/>
        <dbReference type="ChEBI" id="CHEBI:58359"/>
    </reaction>
</comment>
<comment type="catalytic activity">
    <reaction evidence="1">
        <text>UTP + NH4(+) + ATP = CTP + ADP + phosphate + 2 H(+)</text>
        <dbReference type="Rhea" id="RHEA:16597"/>
        <dbReference type="ChEBI" id="CHEBI:15378"/>
        <dbReference type="ChEBI" id="CHEBI:28938"/>
        <dbReference type="ChEBI" id="CHEBI:30616"/>
        <dbReference type="ChEBI" id="CHEBI:37563"/>
        <dbReference type="ChEBI" id="CHEBI:43474"/>
        <dbReference type="ChEBI" id="CHEBI:46398"/>
        <dbReference type="ChEBI" id="CHEBI:456216"/>
    </reaction>
</comment>
<comment type="activity regulation">
    <text evidence="1">Allosterically activated by GTP, when glutamine is the substrate; GTP has no effect on the reaction when ammonia is the substrate. The allosteric effector GTP functions by stabilizing the protein conformation that binds the tetrahedral intermediate(s) formed during glutamine hydrolysis. Inhibited by the product CTP, via allosteric rather than competitive inhibition.</text>
</comment>
<comment type="pathway">
    <text evidence="1">Pyrimidine metabolism; CTP biosynthesis via de novo pathway; CTP from UDP: step 2/2.</text>
</comment>
<comment type="subunit">
    <text evidence="1">Homotetramer.</text>
</comment>
<comment type="miscellaneous">
    <text evidence="1">CTPSs have evolved a hybrid strategy for distinguishing between UTP and CTP. The overlapping regions of the product feedback inhibitory and substrate sites recognize a common feature in both compounds, the triphosphate moiety. To differentiate isosteric substrate and product pyrimidine rings, an additional pocket far from the expected kinase/ligase catalytic site, specifically recognizes the cytosine and ribose portions of the product inhibitor.</text>
</comment>
<comment type="similarity">
    <text evidence="1">Belongs to the CTP synthase family.</text>
</comment>
<dbReference type="EC" id="6.3.4.2" evidence="1"/>
<dbReference type="EMBL" id="CP000113">
    <property type="protein sequence ID" value="ABF89807.1"/>
    <property type="molecule type" value="Genomic_DNA"/>
</dbReference>
<dbReference type="RefSeq" id="WP_011551216.1">
    <property type="nucleotide sequence ID" value="NC_008095.1"/>
</dbReference>
<dbReference type="SMR" id="Q1DDB7"/>
<dbReference type="STRING" id="246197.MXAN_1096"/>
<dbReference type="EnsemblBacteria" id="ABF89807">
    <property type="protein sequence ID" value="ABF89807"/>
    <property type="gene ID" value="MXAN_1096"/>
</dbReference>
<dbReference type="GeneID" id="41358547"/>
<dbReference type="KEGG" id="mxa:MXAN_1096"/>
<dbReference type="eggNOG" id="COG0504">
    <property type="taxonomic scope" value="Bacteria"/>
</dbReference>
<dbReference type="HOGENOM" id="CLU_011675_5_0_7"/>
<dbReference type="OrthoDB" id="9801107at2"/>
<dbReference type="UniPathway" id="UPA00159">
    <property type="reaction ID" value="UER00277"/>
</dbReference>
<dbReference type="Proteomes" id="UP000002402">
    <property type="component" value="Chromosome"/>
</dbReference>
<dbReference type="GO" id="GO:0005829">
    <property type="term" value="C:cytosol"/>
    <property type="evidence" value="ECO:0007669"/>
    <property type="project" value="TreeGrafter"/>
</dbReference>
<dbReference type="GO" id="GO:0005524">
    <property type="term" value="F:ATP binding"/>
    <property type="evidence" value="ECO:0007669"/>
    <property type="project" value="UniProtKB-KW"/>
</dbReference>
<dbReference type="GO" id="GO:0003883">
    <property type="term" value="F:CTP synthase activity"/>
    <property type="evidence" value="ECO:0007669"/>
    <property type="project" value="UniProtKB-UniRule"/>
</dbReference>
<dbReference type="GO" id="GO:0004359">
    <property type="term" value="F:glutaminase activity"/>
    <property type="evidence" value="ECO:0007669"/>
    <property type="project" value="RHEA"/>
</dbReference>
<dbReference type="GO" id="GO:0042802">
    <property type="term" value="F:identical protein binding"/>
    <property type="evidence" value="ECO:0007669"/>
    <property type="project" value="TreeGrafter"/>
</dbReference>
<dbReference type="GO" id="GO:0046872">
    <property type="term" value="F:metal ion binding"/>
    <property type="evidence" value="ECO:0007669"/>
    <property type="project" value="UniProtKB-KW"/>
</dbReference>
<dbReference type="GO" id="GO:0044210">
    <property type="term" value="P:'de novo' CTP biosynthetic process"/>
    <property type="evidence" value="ECO:0007669"/>
    <property type="project" value="UniProtKB-UniRule"/>
</dbReference>
<dbReference type="GO" id="GO:0019856">
    <property type="term" value="P:pyrimidine nucleobase biosynthetic process"/>
    <property type="evidence" value="ECO:0007669"/>
    <property type="project" value="TreeGrafter"/>
</dbReference>
<dbReference type="CDD" id="cd03113">
    <property type="entry name" value="CTPS_N"/>
    <property type="match status" value="1"/>
</dbReference>
<dbReference type="CDD" id="cd01746">
    <property type="entry name" value="GATase1_CTP_Synthase"/>
    <property type="match status" value="1"/>
</dbReference>
<dbReference type="FunFam" id="3.40.50.300:FF:000009">
    <property type="entry name" value="CTP synthase"/>
    <property type="match status" value="1"/>
</dbReference>
<dbReference type="FunFam" id="3.40.50.880:FF:000002">
    <property type="entry name" value="CTP synthase"/>
    <property type="match status" value="1"/>
</dbReference>
<dbReference type="Gene3D" id="3.40.50.880">
    <property type="match status" value="1"/>
</dbReference>
<dbReference type="Gene3D" id="3.40.50.300">
    <property type="entry name" value="P-loop containing nucleotide triphosphate hydrolases"/>
    <property type="match status" value="1"/>
</dbReference>
<dbReference type="HAMAP" id="MF_01227">
    <property type="entry name" value="PyrG"/>
    <property type="match status" value="1"/>
</dbReference>
<dbReference type="InterPro" id="IPR029062">
    <property type="entry name" value="Class_I_gatase-like"/>
</dbReference>
<dbReference type="InterPro" id="IPR004468">
    <property type="entry name" value="CTP_synthase"/>
</dbReference>
<dbReference type="InterPro" id="IPR017456">
    <property type="entry name" value="CTP_synthase_N"/>
</dbReference>
<dbReference type="InterPro" id="IPR017926">
    <property type="entry name" value="GATASE"/>
</dbReference>
<dbReference type="InterPro" id="IPR033828">
    <property type="entry name" value="GATase1_CTP_Synthase"/>
</dbReference>
<dbReference type="InterPro" id="IPR027417">
    <property type="entry name" value="P-loop_NTPase"/>
</dbReference>
<dbReference type="NCBIfam" id="NF003792">
    <property type="entry name" value="PRK05380.1"/>
    <property type="match status" value="1"/>
</dbReference>
<dbReference type="NCBIfam" id="TIGR00337">
    <property type="entry name" value="PyrG"/>
    <property type="match status" value="1"/>
</dbReference>
<dbReference type="PANTHER" id="PTHR11550">
    <property type="entry name" value="CTP SYNTHASE"/>
    <property type="match status" value="1"/>
</dbReference>
<dbReference type="PANTHER" id="PTHR11550:SF0">
    <property type="entry name" value="CTP SYNTHASE-RELATED"/>
    <property type="match status" value="1"/>
</dbReference>
<dbReference type="Pfam" id="PF06418">
    <property type="entry name" value="CTP_synth_N"/>
    <property type="match status" value="1"/>
</dbReference>
<dbReference type="Pfam" id="PF00117">
    <property type="entry name" value="GATase"/>
    <property type="match status" value="1"/>
</dbReference>
<dbReference type="SUPFAM" id="SSF52317">
    <property type="entry name" value="Class I glutamine amidotransferase-like"/>
    <property type="match status" value="1"/>
</dbReference>
<dbReference type="SUPFAM" id="SSF52540">
    <property type="entry name" value="P-loop containing nucleoside triphosphate hydrolases"/>
    <property type="match status" value="1"/>
</dbReference>
<dbReference type="PROSITE" id="PS51273">
    <property type="entry name" value="GATASE_TYPE_1"/>
    <property type="match status" value="1"/>
</dbReference>
<protein>
    <recommendedName>
        <fullName evidence="1">CTP synthase</fullName>
        <ecNumber evidence="1">6.3.4.2</ecNumber>
    </recommendedName>
    <alternativeName>
        <fullName evidence="1">Cytidine 5'-triphosphate synthase</fullName>
    </alternativeName>
    <alternativeName>
        <fullName evidence="1">Cytidine triphosphate synthetase</fullName>
        <shortName evidence="1">CTP synthetase</shortName>
        <shortName evidence="1">CTPS</shortName>
    </alternativeName>
    <alternativeName>
        <fullName evidence="1">UTP--ammonia ligase</fullName>
    </alternativeName>
</protein>
<sequence length="546" mass="60535">MRSKKTKFIFVTGGVVSSLGKGLASASIGALLENRGLAVTLIKLDPYINVDPGTMSPFQHGEVFVTEDGGETDMDLGHYERFTNARMSRLNNFTSGRIYHAVIMKERRGEYLGKTVQVIPHVTDEIKSSIRQAAQDADVVIVEVGGTVGDIESLPFLEAIRQMRYDVGNENVVYVHLTLLPYIGAAGEVKTKPTQHSVMKLREIGIQPDFLVCRTDREVPRELKDKIAMFCNVDTRSVFTSPDVRSTYELPLELHRQGLDERLAEVLNIWSRAPHLERWENIIRKVYEPARGQVRIAIVGKYVNLTESYKSLNEALLHGGIANDVKVNLHFVDSQEVEEQGAEKLLAGVDAILVPGGFGVRGTEGKIAAVRYAREKKVPFFGICLGLQMAVVEFSRGVLGLSSANSLEFNEHTPHPVVTLMESQVKVQDKGGTMRLGSYACALKPGSLAHQLYGQDTIQERHRHRYEVNNAYRSKLQEAGLVISGSNPELNLVEMIELADHPYFIGCQFHPEFKSKPFAPHPLFSGFIRAALAQRDANAAAGKVTE</sequence>
<feature type="chain" id="PRO_0000266159" description="CTP synthase">
    <location>
        <begin position="1"/>
        <end position="546"/>
    </location>
</feature>
<feature type="domain" description="Glutamine amidotransferase type-1" evidence="1">
    <location>
        <begin position="295"/>
        <end position="537"/>
    </location>
</feature>
<feature type="region of interest" description="Amidoligase domain" evidence="1">
    <location>
        <begin position="1"/>
        <end position="269"/>
    </location>
</feature>
<feature type="active site" description="Nucleophile; for glutamine hydrolysis" evidence="1">
    <location>
        <position position="384"/>
    </location>
</feature>
<feature type="active site" evidence="1">
    <location>
        <position position="510"/>
    </location>
</feature>
<feature type="active site" evidence="1">
    <location>
        <position position="512"/>
    </location>
</feature>
<feature type="binding site" evidence="1">
    <location>
        <position position="17"/>
    </location>
    <ligand>
        <name>CTP</name>
        <dbReference type="ChEBI" id="CHEBI:37563"/>
        <note>allosteric inhibitor</note>
    </ligand>
</feature>
<feature type="binding site" evidence="1">
    <location>
        <position position="17"/>
    </location>
    <ligand>
        <name>UTP</name>
        <dbReference type="ChEBI" id="CHEBI:46398"/>
    </ligand>
</feature>
<feature type="binding site" evidence="1">
    <location>
        <begin position="18"/>
        <end position="23"/>
    </location>
    <ligand>
        <name>ATP</name>
        <dbReference type="ChEBI" id="CHEBI:30616"/>
    </ligand>
</feature>
<feature type="binding site" evidence="1">
    <location>
        <position position="75"/>
    </location>
    <ligand>
        <name>ATP</name>
        <dbReference type="ChEBI" id="CHEBI:30616"/>
    </ligand>
</feature>
<feature type="binding site" evidence="1">
    <location>
        <position position="75"/>
    </location>
    <ligand>
        <name>Mg(2+)</name>
        <dbReference type="ChEBI" id="CHEBI:18420"/>
    </ligand>
</feature>
<feature type="binding site" evidence="1">
    <location>
        <position position="143"/>
    </location>
    <ligand>
        <name>Mg(2+)</name>
        <dbReference type="ChEBI" id="CHEBI:18420"/>
    </ligand>
</feature>
<feature type="binding site" evidence="1">
    <location>
        <begin position="150"/>
        <end position="152"/>
    </location>
    <ligand>
        <name>CTP</name>
        <dbReference type="ChEBI" id="CHEBI:37563"/>
        <note>allosteric inhibitor</note>
    </ligand>
</feature>
<feature type="binding site" evidence="1">
    <location>
        <begin position="190"/>
        <end position="195"/>
    </location>
    <ligand>
        <name>CTP</name>
        <dbReference type="ChEBI" id="CHEBI:37563"/>
        <note>allosteric inhibitor</note>
    </ligand>
</feature>
<feature type="binding site" evidence="1">
    <location>
        <begin position="190"/>
        <end position="195"/>
    </location>
    <ligand>
        <name>UTP</name>
        <dbReference type="ChEBI" id="CHEBI:46398"/>
    </ligand>
</feature>
<feature type="binding site" evidence="1">
    <location>
        <position position="226"/>
    </location>
    <ligand>
        <name>CTP</name>
        <dbReference type="ChEBI" id="CHEBI:37563"/>
        <note>allosteric inhibitor</note>
    </ligand>
</feature>
<feature type="binding site" evidence="1">
    <location>
        <position position="226"/>
    </location>
    <ligand>
        <name>UTP</name>
        <dbReference type="ChEBI" id="CHEBI:46398"/>
    </ligand>
</feature>
<feature type="binding site" evidence="1">
    <location>
        <position position="357"/>
    </location>
    <ligand>
        <name>L-glutamine</name>
        <dbReference type="ChEBI" id="CHEBI:58359"/>
    </ligand>
</feature>
<feature type="binding site" evidence="1">
    <location>
        <begin position="385"/>
        <end position="388"/>
    </location>
    <ligand>
        <name>L-glutamine</name>
        <dbReference type="ChEBI" id="CHEBI:58359"/>
    </ligand>
</feature>
<feature type="binding site" evidence="1">
    <location>
        <position position="408"/>
    </location>
    <ligand>
        <name>L-glutamine</name>
        <dbReference type="ChEBI" id="CHEBI:58359"/>
    </ligand>
</feature>
<feature type="binding site" evidence="1">
    <location>
        <position position="465"/>
    </location>
    <ligand>
        <name>L-glutamine</name>
        <dbReference type="ChEBI" id="CHEBI:58359"/>
    </ligand>
</feature>
<organism>
    <name type="scientific">Myxococcus xanthus (strain DK1622)</name>
    <dbReference type="NCBI Taxonomy" id="246197"/>
    <lineage>
        <taxon>Bacteria</taxon>
        <taxon>Pseudomonadati</taxon>
        <taxon>Myxococcota</taxon>
        <taxon>Myxococcia</taxon>
        <taxon>Myxococcales</taxon>
        <taxon>Cystobacterineae</taxon>
        <taxon>Myxococcaceae</taxon>
        <taxon>Myxococcus</taxon>
    </lineage>
</organism>
<evidence type="ECO:0000255" key="1">
    <source>
        <dbReference type="HAMAP-Rule" id="MF_01227"/>
    </source>
</evidence>
<name>PYRG_MYXXD</name>
<keyword id="KW-0067">ATP-binding</keyword>
<keyword id="KW-0315">Glutamine amidotransferase</keyword>
<keyword id="KW-0436">Ligase</keyword>
<keyword id="KW-0460">Magnesium</keyword>
<keyword id="KW-0479">Metal-binding</keyword>
<keyword id="KW-0547">Nucleotide-binding</keyword>
<keyword id="KW-0665">Pyrimidine biosynthesis</keyword>
<keyword id="KW-1185">Reference proteome</keyword>
<accession>Q1DDB7</accession>
<reference key="1">
    <citation type="journal article" date="2006" name="Proc. Natl. Acad. Sci. U.S.A.">
        <title>Evolution of sensory complexity recorded in a myxobacterial genome.</title>
        <authorList>
            <person name="Goldman B.S."/>
            <person name="Nierman W.C."/>
            <person name="Kaiser D."/>
            <person name="Slater S.C."/>
            <person name="Durkin A.S."/>
            <person name="Eisen J.A."/>
            <person name="Ronning C.M."/>
            <person name="Barbazuk W.B."/>
            <person name="Blanchard M."/>
            <person name="Field C."/>
            <person name="Halling C."/>
            <person name="Hinkle G."/>
            <person name="Iartchuk O."/>
            <person name="Kim H.S."/>
            <person name="Mackenzie C."/>
            <person name="Madupu R."/>
            <person name="Miller N."/>
            <person name="Shvartsbeyn A."/>
            <person name="Sullivan S.A."/>
            <person name="Vaudin M."/>
            <person name="Wiegand R."/>
            <person name="Kaplan H.B."/>
        </authorList>
    </citation>
    <scope>NUCLEOTIDE SEQUENCE [LARGE SCALE GENOMIC DNA]</scope>
    <source>
        <strain>DK1622</strain>
    </source>
</reference>
<gene>
    <name evidence="1" type="primary">pyrG</name>
    <name type="ordered locus">MXAN_1096</name>
</gene>